<accession>Q8RG86</accession>
<feature type="chain" id="PRO_0000145007" description="Carbamoyl phosphate synthase large chain">
    <location>
        <begin position="1"/>
        <end position="1058"/>
    </location>
</feature>
<feature type="domain" description="ATP-grasp 1" evidence="1">
    <location>
        <begin position="133"/>
        <end position="327"/>
    </location>
</feature>
<feature type="domain" description="ATP-grasp 2" evidence="1">
    <location>
        <begin position="671"/>
        <end position="861"/>
    </location>
</feature>
<feature type="domain" description="MGS-like" evidence="1">
    <location>
        <begin position="930"/>
        <end position="1058"/>
    </location>
</feature>
<feature type="region of interest" description="Carboxyphosphate synthetic domain" evidence="1">
    <location>
        <begin position="1"/>
        <end position="401"/>
    </location>
</feature>
<feature type="region of interest" description="Oligomerization domain" evidence="1">
    <location>
        <begin position="402"/>
        <end position="546"/>
    </location>
</feature>
<feature type="region of interest" description="Carbamoyl phosphate synthetic domain" evidence="1">
    <location>
        <begin position="547"/>
        <end position="929"/>
    </location>
</feature>
<feature type="region of interest" description="Allosteric domain" evidence="1">
    <location>
        <begin position="930"/>
        <end position="1058"/>
    </location>
</feature>
<feature type="binding site" evidence="1">
    <location>
        <position position="129"/>
    </location>
    <ligand>
        <name>ATP</name>
        <dbReference type="ChEBI" id="CHEBI:30616"/>
        <label>1</label>
    </ligand>
</feature>
<feature type="binding site" evidence="1">
    <location>
        <position position="169"/>
    </location>
    <ligand>
        <name>ATP</name>
        <dbReference type="ChEBI" id="CHEBI:30616"/>
        <label>1</label>
    </ligand>
</feature>
<feature type="binding site" evidence="1">
    <location>
        <position position="175"/>
    </location>
    <ligand>
        <name>ATP</name>
        <dbReference type="ChEBI" id="CHEBI:30616"/>
        <label>1</label>
    </ligand>
</feature>
<feature type="binding site" evidence="1">
    <location>
        <position position="176"/>
    </location>
    <ligand>
        <name>ATP</name>
        <dbReference type="ChEBI" id="CHEBI:30616"/>
        <label>1</label>
    </ligand>
</feature>
<feature type="binding site" evidence="1">
    <location>
        <position position="208"/>
    </location>
    <ligand>
        <name>ATP</name>
        <dbReference type="ChEBI" id="CHEBI:30616"/>
        <label>1</label>
    </ligand>
</feature>
<feature type="binding site" evidence="1">
    <location>
        <position position="210"/>
    </location>
    <ligand>
        <name>ATP</name>
        <dbReference type="ChEBI" id="CHEBI:30616"/>
        <label>1</label>
    </ligand>
</feature>
<feature type="binding site" evidence="1">
    <location>
        <position position="215"/>
    </location>
    <ligand>
        <name>ATP</name>
        <dbReference type="ChEBI" id="CHEBI:30616"/>
        <label>1</label>
    </ligand>
</feature>
<feature type="binding site" evidence="1">
    <location>
        <position position="241"/>
    </location>
    <ligand>
        <name>ATP</name>
        <dbReference type="ChEBI" id="CHEBI:30616"/>
        <label>1</label>
    </ligand>
</feature>
<feature type="binding site" evidence="1">
    <location>
        <position position="242"/>
    </location>
    <ligand>
        <name>ATP</name>
        <dbReference type="ChEBI" id="CHEBI:30616"/>
        <label>1</label>
    </ligand>
</feature>
<feature type="binding site" evidence="1">
    <location>
        <position position="243"/>
    </location>
    <ligand>
        <name>ATP</name>
        <dbReference type="ChEBI" id="CHEBI:30616"/>
        <label>1</label>
    </ligand>
</feature>
<feature type="binding site" evidence="1">
    <location>
        <position position="284"/>
    </location>
    <ligand>
        <name>ATP</name>
        <dbReference type="ChEBI" id="CHEBI:30616"/>
        <label>1</label>
    </ligand>
</feature>
<feature type="binding site" evidence="1">
    <location>
        <position position="284"/>
    </location>
    <ligand>
        <name>Mg(2+)</name>
        <dbReference type="ChEBI" id="CHEBI:18420"/>
        <label>1</label>
    </ligand>
</feature>
<feature type="binding site" evidence="1">
    <location>
        <position position="284"/>
    </location>
    <ligand>
        <name>Mn(2+)</name>
        <dbReference type="ChEBI" id="CHEBI:29035"/>
        <label>1</label>
    </ligand>
</feature>
<feature type="binding site" evidence="1">
    <location>
        <position position="298"/>
    </location>
    <ligand>
        <name>ATP</name>
        <dbReference type="ChEBI" id="CHEBI:30616"/>
        <label>1</label>
    </ligand>
</feature>
<feature type="binding site" evidence="1">
    <location>
        <position position="298"/>
    </location>
    <ligand>
        <name>Mg(2+)</name>
        <dbReference type="ChEBI" id="CHEBI:18420"/>
        <label>1</label>
    </ligand>
</feature>
<feature type="binding site" evidence="1">
    <location>
        <position position="298"/>
    </location>
    <ligand>
        <name>Mg(2+)</name>
        <dbReference type="ChEBI" id="CHEBI:18420"/>
        <label>2</label>
    </ligand>
</feature>
<feature type="binding site" evidence="1">
    <location>
        <position position="298"/>
    </location>
    <ligand>
        <name>Mn(2+)</name>
        <dbReference type="ChEBI" id="CHEBI:29035"/>
        <label>1</label>
    </ligand>
</feature>
<feature type="binding site" evidence="1">
    <location>
        <position position="298"/>
    </location>
    <ligand>
        <name>Mn(2+)</name>
        <dbReference type="ChEBI" id="CHEBI:29035"/>
        <label>2</label>
    </ligand>
</feature>
<feature type="binding site" evidence="1">
    <location>
        <position position="300"/>
    </location>
    <ligand>
        <name>Mg(2+)</name>
        <dbReference type="ChEBI" id="CHEBI:18420"/>
        <label>2</label>
    </ligand>
</feature>
<feature type="binding site" evidence="1">
    <location>
        <position position="300"/>
    </location>
    <ligand>
        <name>Mn(2+)</name>
        <dbReference type="ChEBI" id="CHEBI:29035"/>
        <label>2</label>
    </ligand>
</feature>
<feature type="binding site" evidence="1">
    <location>
        <position position="707"/>
    </location>
    <ligand>
        <name>ATP</name>
        <dbReference type="ChEBI" id="CHEBI:30616"/>
        <label>2</label>
    </ligand>
</feature>
<feature type="binding site" evidence="1">
    <location>
        <position position="746"/>
    </location>
    <ligand>
        <name>ATP</name>
        <dbReference type="ChEBI" id="CHEBI:30616"/>
        <label>2</label>
    </ligand>
</feature>
<feature type="binding site" evidence="1">
    <location>
        <position position="748"/>
    </location>
    <ligand>
        <name>ATP</name>
        <dbReference type="ChEBI" id="CHEBI:30616"/>
        <label>2</label>
    </ligand>
</feature>
<feature type="binding site" evidence="1">
    <location>
        <position position="752"/>
    </location>
    <ligand>
        <name>ATP</name>
        <dbReference type="ChEBI" id="CHEBI:30616"/>
        <label>2</label>
    </ligand>
</feature>
<feature type="binding site" evidence="1">
    <location>
        <position position="777"/>
    </location>
    <ligand>
        <name>ATP</name>
        <dbReference type="ChEBI" id="CHEBI:30616"/>
        <label>2</label>
    </ligand>
</feature>
<feature type="binding site" evidence="1">
    <location>
        <position position="778"/>
    </location>
    <ligand>
        <name>ATP</name>
        <dbReference type="ChEBI" id="CHEBI:30616"/>
        <label>2</label>
    </ligand>
</feature>
<feature type="binding site" evidence="1">
    <location>
        <position position="779"/>
    </location>
    <ligand>
        <name>ATP</name>
        <dbReference type="ChEBI" id="CHEBI:30616"/>
        <label>2</label>
    </ligand>
</feature>
<feature type="binding site" evidence="1">
    <location>
        <position position="780"/>
    </location>
    <ligand>
        <name>ATP</name>
        <dbReference type="ChEBI" id="CHEBI:30616"/>
        <label>2</label>
    </ligand>
</feature>
<feature type="binding site" evidence="1">
    <location>
        <position position="820"/>
    </location>
    <ligand>
        <name>ATP</name>
        <dbReference type="ChEBI" id="CHEBI:30616"/>
        <label>2</label>
    </ligand>
</feature>
<feature type="binding site" evidence="1">
    <location>
        <position position="820"/>
    </location>
    <ligand>
        <name>Mg(2+)</name>
        <dbReference type="ChEBI" id="CHEBI:18420"/>
        <label>3</label>
    </ligand>
</feature>
<feature type="binding site" evidence="1">
    <location>
        <position position="820"/>
    </location>
    <ligand>
        <name>Mn(2+)</name>
        <dbReference type="ChEBI" id="CHEBI:29035"/>
        <label>3</label>
    </ligand>
</feature>
<feature type="binding site" evidence="1">
    <location>
        <position position="832"/>
    </location>
    <ligand>
        <name>ATP</name>
        <dbReference type="ChEBI" id="CHEBI:30616"/>
        <label>2</label>
    </ligand>
</feature>
<feature type="binding site" evidence="1">
    <location>
        <position position="832"/>
    </location>
    <ligand>
        <name>Mg(2+)</name>
        <dbReference type="ChEBI" id="CHEBI:18420"/>
        <label>3</label>
    </ligand>
</feature>
<feature type="binding site" evidence="1">
    <location>
        <position position="832"/>
    </location>
    <ligand>
        <name>Mg(2+)</name>
        <dbReference type="ChEBI" id="CHEBI:18420"/>
        <label>4</label>
    </ligand>
</feature>
<feature type="binding site" evidence="1">
    <location>
        <position position="832"/>
    </location>
    <ligand>
        <name>Mn(2+)</name>
        <dbReference type="ChEBI" id="CHEBI:29035"/>
        <label>3</label>
    </ligand>
</feature>
<feature type="binding site" evidence="1">
    <location>
        <position position="832"/>
    </location>
    <ligand>
        <name>Mn(2+)</name>
        <dbReference type="ChEBI" id="CHEBI:29035"/>
        <label>4</label>
    </ligand>
</feature>
<feature type="binding site" evidence="1">
    <location>
        <position position="834"/>
    </location>
    <ligand>
        <name>Mg(2+)</name>
        <dbReference type="ChEBI" id="CHEBI:18420"/>
        <label>4</label>
    </ligand>
</feature>
<feature type="binding site" evidence="1">
    <location>
        <position position="834"/>
    </location>
    <ligand>
        <name>Mn(2+)</name>
        <dbReference type="ChEBI" id="CHEBI:29035"/>
        <label>4</label>
    </ligand>
</feature>
<organism>
    <name type="scientific">Fusobacterium nucleatum subsp. nucleatum (strain ATCC 25586 / DSM 15643 / BCRC 10681 / CIP 101130 / JCM 8532 / KCTC 2640 / LMG 13131 / VPI 4355)</name>
    <dbReference type="NCBI Taxonomy" id="190304"/>
    <lineage>
        <taxon>Bacteria</taxon>
        <taxon>Fusobacteriati</taxon>
        <taxon>Fusobacteriota</taxon>
        <taxon>Fusobacteriia</taxon>
        <taxon>Fusobacteriales</taxon>
        <taxon>Fusobacteriaceae</taxon>
        <taxon>Fusobacterium</taxon>
    </lineage>
</organism>
<gene>
    <name evidence="1" type="primary">carB</name>
    <name type="ordered locus">FN0422</name>
</gene>
<name>CARB_FUSNN</name>
<proteinExistence type="inferred from homology"/>
<reference key="1">
    <citation type="journal article" date="2002" name="J. Bacteriol.">
        <title>Genome sequence and analysis of the oral bacterium Fusobacterium nucleatum strain ATCC 25586.</title>
        <authorList>
            <person name="Kapatral V."/>
            <person name="Anderson I."/>
            <person name="Ivanova N."/>
            <person name="Reznik G."/>
            <person name="Los T."/>
            <person name="Lykidis A."/>
            <person name="Bhattacharyya A."/>
            <person name="Bartman A."/>
            <person name="Gardner W."/>
            <person name="Grechkin G."/>
            <person name="Zhu L."/>
            <person name="Vasieva O."/>
            <person name="Chu L."/>
            <person name="Kogan Y."/>
            <person name="Chaga O."/>
            <person name="Goltsman E."/>
            <person name="Bernal A."/>
            <person name="Larsen N."/>
            <person name="D'Souza M."/>
            <person name="Walunas T."/>
            <person name="Pusch G."/>
            <person name="Haselkorn R."/>
            <person name="Fonstein M."/>
            <person name="Kyrpides N.C."/>
            <person name="Overbeek R."/>
        </authorList>
    </citation>
    <scope>NUCLEOTIDE SEQUENCE [LARGE SCALE GENOMIC DNA]</scope>
    <source>
        <strain>ATCC 25586 / DSM 15643 / BCRC 10681 / CIP 101130 / JCM 8532 / KCTC 2640 / LMG 13131 / VPI 4355</strain>
    </source>
</reference>
<protein>
    <recommendedName>
        <fullName evidence="1">Carbamoyl phosphate synthase large chain</fullName>
        <ecNumber evidence="1">6.3.4.16</ecNumber>
        <ecNumber evidence="1">6.3.5.5</ecNumber>
    </recommendedName>
    <alternativeName>
        <fullName evidence="1">Carbamoyl phosphate synthetase ammonia chain</fullName>
    </alternativeName>
</protein>
<sequence length="1058" mass="117452">MPKRKDIKTILVIGSGPIIIGQAAEFDYAGTQACLSLREEGYEVILVNSNPATIMTDKEIADKVYIEPLTVEFLSKIIRKEKPDALLPTLGGQVALNLAVSLHESGILDECGVEILGTKLTSIKQAEDRELFRDLMNELNEPVPDSAIVHTLEEAENFVKEIDYPVIVRPAFTMGGTGGGICYNEEDLHEIVPNGLNYSPVHQCLLEKSIAGYKEIEYEVMRDSNDTAIVVCNMENIDPVGIHTGDSIVVAPSQTLTDREHHMLRDVSLKIIRALKIEGGCNVQIALDPNSFKYYIIEVNPRVSRSSALASKATGYPIAKIAAKIAVGMTLDEIINPVTKSSYACFEPAIDYVVTKIPRFPFDKFGDGDRYLGTQMKATGEVMAIGRTLEESLLKAIRSLEYGVHHLGLPNGEEFSLEKIIKRIKLAGDERLFFIGEALRRDVSIEEIHEYTKIDLFFLNKMKNIIDLEHLLKDNKGNIELLRKVKTFGFSDRVIAHRWEMTEPEITELRHKHNIRPVYKMVDTCAAEFDSNTPYFYSTYEFENESTRSDKEKIVVLGSGPIRIGQGIEFDYATVHAIMAIKKLGYEAIVINNNPETVSTDFSISDKLYFEPLTQEDVMEILDLEKPLGVVVQFGGQTAINLADKLVKNGIQILGSSLDSIDTAEDRDRFEKLLIGLKIPQPLGKTAFDVETALKNANEIGYPVLVRPSYVLGGRAMEIVYNDEDLTKYMEKAVHINPDHPVLIDRYLIGKEIEVDAISDGENTFIPGIMEHIERAGVHSGDSISIYPPQSLSEKEIETLIDYTKKLASGLEVKGLINIQYVVSKGEIYVLEVNPRASRTVPFLSKVTGVPVANIAMQCILGKKLKDLGFTKDIADIGNFVSVKVPVFSFQKLKNVDTTLGPEMKSTGEVIGTDVNLQKALYKGLTAAGIKIKDYGRVLFTIDDKNKEAALNLAKGFSDVGFSILTTEGTGIYFEEYGLKVKKVGKIDNSDYSVLDAIQNGDVDIVINTTTKGKSSEKDGFRIRRKATEYGVICFTSLDTANALLRVIESMSFRVQTL</sequence>
<evidence type="ECO:0000255" key="1">
    <source>
        <dbReference type="HAMAP-Rule" id="MF_01210"/>
    </source>
</evidence>
<evidence type="ECO:0000305" key="2"/>
<keyword id="KW-0028">Amino-acid biosynthesis</keyword>
<keyword id="KW-0055">Arginine biosynthesis</keyword>
<keyword id="KW-0067">ATP-binding</keyword>
<keyword id="KW-0436">Ligase</keyword>
<keyword id="KW-0460">Magnesium</keyword>
<keyword id="KW-0464">Manganese</keyword>
<keyword id="KW-0479">Metal-binding</keyword>
<keyword id="KW-0547">Nucleotide-binding</keyword>
<keyword id="KW-0665">Pyrimidine biosynthesis</keyword>
<keyword id="KW-1185">Reference proteome</keyword>
<keyword id="KW-0677">Repeat</keyword>
<comment type="function">
    <text evidence="1">Large subunit of the glutamine-dependent carbamoyl phosphate synthetase (CPSase). CPSase catalyzes the formation of carbamoyl phosphate from the ammonia moiety of glutamine, carbonate, and phosphate donated by ATP, constituting the first step of 2 biosynthetic pathways, one leading to arginine and/or urea and the other to pyrimidine nucleotides. The large subunit (synthetase) binds the substrates ammonia (free or transferred from glutamine from the small subunit), hydrogencarbonate and ATP and carries out an ATP-coupled ligase reaction, activating hydrogencarbonate by forming carboxy phosphate which reacts with ammonia to form carbamoyl phosphate.</text>
</comment>
<comment type="catalytic activity">
    <reaction evidence="1">
        <text>hydrogencarbonate + L-glutamine + 2 ATP + H2O = carbamoyl phosphate + L-glutamate + 2 ADP + phosphate + 2 H(+)</text>
        <dbReference type="Rhea" id="RHEA:18633"/>
        <dbReference type="ChEBI" id="CHEBI:15377"/>
        <dbReference type="ChEBI" id="CHEBI:15378"/>
        <dbReference type="ChEBI" id="CHEBI:17544"/>
        <dbReference type="ChEBI" id="CHEBI:29985"/>
        <dbReference type="ChEBI" id="CHEBI:30616"/>
        <dbReference type="ChEBI" id="CHEBI:43474"/>
        <dbReference type="ChEBI" id="CHEBI:58228"/>
        <dbReference type="ChEBI" id="CHEBI:58359"/>
        <dbReference type="ChEBI" id="CHEBI:456216"/>
        <dbReference type="EC" id="6.3.5.5"/>
    </reaction>
</comment>
<comment type="catalytic activity">
    <molecule>Carbamoyl phosphate synthase large chain</molecule>
    <reaction evidence="1">
        <text>hydrogencarbonate + NH4(+) + 2 ATP = carbamoyl phosphate + 2 ADP + phosphate + 2 H(+)</text>
        <dbReference type="Rhea" id="RHEA:18029"/>
        <dbReference type="ChEBI" id="CHEBI:15378"/>
        <dbReference type="ChEBI" id="CHEBI:17544"/>
        <dbReference type="ChEBI" id="CHEBI:28938"/>
        <dbReference type="ChEBI" id="CHEBI:30616"/>
        <dbReference type="ChEBI" id="CHEBI:43474"/>
        <dbReference type="ChEBI" id="CHEBI:58228"/>
        <dbReference type="ChEBI" id="CHEBI:456216"/>
        <dbReference type="EC" id="6.3.4.16"/>
    </reaction>
</comment>
<comment type="cofactor">
    <cofactor evidence="1">
        <name>Mg(2+)</name>
        <dbReference type="ChEBI" id="CHEBI:18420"/>
    </cofactor>
    <cofactor evidence="1">
        <name>Mn(2+)</name>
        <dbReference type="ChEBI" id="CHEBI:29035"/>
    </cofactor>
    <text evidence="1">Binds 4 Mg(2+) or Mn(2+) ions per subunit.</text>
</comment>
<comment type="pathway">
    <text evidence="1">Amino-acid biosynthesis; L-arginine biosynthesis; carbamoyl phosphate from bicarbonate: step 1/1.</text>
</comment>
<comment type="pathway">
    <text evidence="1">Pyrimidine metabolism; UMP biosynthesis via de novo pathway; (S)-dihydroorotate from bicarbonate: step 1/3.</text>
</comment>
<comment type="subunit">
    <text evidence="1">Composed of two chains; the small (or glutamine) chain promotes the hydrolysis of glutamine to ammonia, which is used by the large (or ammonia) chain to synthesize carbamoyl phosphate. Tetramer of heterodimers (alpha,beta)4.</text>
</comment>
<comment type="domain">
    <text evidence="1">The large subunit is composed of 2 ATP-grasp domains that are involved in binding the 2 ATP molecules needed for carbamoyl phosphate synthesis. The N-terminal ATP-grasp domain (referred to as the carboxyphosphate synthetic component) catalyzes the ATP-dependent phosphorylation of hydrogencarbonate to carboxyphosphate and the subsequent nucleophilic attack by ammonia to form a carbamate intermediate. The C-terminal ATP-grasp domain (referred to as the carbamoyl phosphate synthetic component) then catalyzes the phosphorylation of carbamate with the second ATP to form the end product carbamoyl phosphate. The reactive and unstable enzyme intermediates are sequentially channeled from one active site to the next through the interior of the protein over a distance of at least 96 A.</text>
</comment>
<comment type="similarity">
    <text evidence="1">Belongs to the CarB family.</text>
</comment>
<comment type="sequence caution" evidence="2">
    <conflict type="erroneous initiation">
        <sequence resource="EMBL-CDS" id="AAL94625"/>
    </conflict>
</comment>
<dbReference type="EC" id="6.3.4.16" evidence="1"/>
<dbReference type="EC" id="6.3.5.5" evidence="1"/>
<dbReference type="EMBL" id="AE009951">
    <property type="protein sequence ID" value="AAL94625.1"/>
    <property type="status" value="ALT_INIT"/>
    <property type="molecule type" value="Genomic_DNA"/>
</dbReference>
<dbReference type="RefSeq" id="NP_603326.2">
    <property type="nucleotide sequence ID" value="NC_003454.1"/>
</dbReference>
<dbReference type="RefSeq" id="WP_011016379.1">
    <property type="nucleotide sequence ID" value="NZ_CP028101.1"/>
</dbReference>
<dbReference type="SMR" id="Q8RG86"/>
<dbReference type="FunCoup" id="Q8RG86">
    <property type="interactions" value="343"/>
</dbReference>
<dbReference type="STRING" id="190304.FN0422"/>
<dbReference type="PaxDb" id="190304-FN0422"/>
<dbReference type="EnsemblBacteria" id="AAL94625">
    <property type="protein sequence ID" value="AAL94625"/>
    <property type="gene ID" value="FN0422"/>
</dbReference>
<dbReference type="GeneID" id="79783432"/>
<dbReference type="KEGG" id="fnu:FN0422"/>
<dbReference type="PATRIC" id="fig|190304.8.peg.999"/>
<dbReference type="eggNOG" id="COG0458">
    <property type="taxonomic scope" value="Bacteria"/>
</dbReference>
<dbReference type="HOGENOM" id="CLU_000513_1_0_0"/>
<dbReference type="InParanoid" id="Q8RG86"/>
<dbReference type="BioCyc" id="FNUC190304:G1FZS-1016-MONOMER"/>
<dbReference type="UniPathway" id="UPA00068">
    <property type="reaction ID" value="UER00171"/>
</dbReference>
<dbReference type="UniPathway" id="UPA00070">
    <property type="reaction ID" value="UER00115"/>
</dbReference>
<dbReference type="Proteomes" id="UP000002521">
    <property type="component" value="Chromosome"/>
</dbReference>
<dbReference type="GO" id="GO:0005737">
    <property type="term" value="C:cytoplasm"/>
    <property type="evidence" value="ECO:0000318"/>
    <property type="project" value="GO_Central"/>
</dbReference>
<dbReference type="GO" id="GO:0005524">
    <property type="term" value="F:ATP binding"/>
    <property type="evidence" value="ECO:0007669"/>
    <property type="project" value="UniProtKB-UniRule"/>
</dbReference>
<dbReference type="GO" id="GO:0004087">
    <property type="term" value="F:carbamoyl-phosphate synthase (ammonia) activity"/>
    <property type="evidence" value="ECO:0007669"/>
    <property type="project" value="RHEA"/>
</dbReference>
<dbReference type="GO" id="GO:0004088">
    <property type="term" value="F:carbamoyl-phosphate synthase (glutamine-hydrolyzing) activity"/>
    <property type="evidence" value="ECO:0007669"/>
    <property type="project" value="UniProtKB-UniRule"/>
</dbReference>
<dbReference type="GO" id="GO:0046872">
    <property type="term" value="F:metal ion binding"/>
    <property type="evidence" value="ECO:0007669"/>
    <property type="project" value="UniProtKB-KW"/>
</dbReference>
<dbReference type="GO" id="GO:0044205">
    <property type="term" value="P:'de novo' UMP biosynthetic process"/>
    <property type="evidence" value="ECO:0007669"/>
    <property type="project" value="UniProtKB-UniRule"/>
</dbReference>
<dbReference type="GO" id="GO:0006541">
    <property type="term" value="P:glutamine metabolic process"/>
    <property type="evidence" value="ECO:0000318"/>
    <property type="project" value="GO_Central"/>
</dbReference>
<dbReference type="GO" id="GO:0006526">
    <property type="term" value="P:L-arginine biosynthetic process"/>
    <property type="evidence" value="ECO:0007669"/>
    <property type="project" value="UniProtKB-UniRule"/>
</dbReference>
<dbReference type="CDD" id="cd01424">
    <property type="entry name" value="MGS_CPS_II"/>
    <property type="match status" value="1"/>
</dbReference>
<dbReference type="FunFam" id="1.10.1030.10:FF:000002">
    <property type="entry name" value="Carbamoyl-phosphate synthase large chain"/>
    <property type="match status" value="1"/>
</dbReference>
<dbReference type="FunFam" id="3.30.1490.20:FF:000001">
    <property type="entry name" value="Carbamoyl-phosphate synthase large chain"/>
    <property type="match status" value="1"/>
</dbReference>
<dbReference type="FunFam" id="3.30.470.20:FF:000001">
    <property type="entry name" value="Carbamoyl-phosphate synthase large chain"/>
    <property type="match status" value="1"/>
</dbReference>
<dbReference type="FunFam" id="3.30.470.20:FF:000026">
    <property type="entry name" value="Carbamoyl-phosphate synthase large chain"/>
    <property type="match status" value="1"/>
</dbReference>
<dbReference type="FunFam" id="3.40.50.1380:FF:000011">
    <property type="entry name" value="Carbamoyl-phosphate synthase large chain"/>
    <property type="match status" value="1"/>
</dbReference>
<dbReference type="FunFam" id="3.40.50.20:FF:000001">
    <property type="entry name" value="Carbamoyl-phosphate synthase large chain"/>
    <property type="match status" value="2"/>
</dbReference>
<dbReference type="Gene3D" id="3.40.50.20">
    <property type="match status" value="2"/>
</dbReference>
<dbReference type="Gene3D" id="3.30.1490.20">
    <property type="entry name" value="ATP-grasp fold, A domain"/>
    <property type="match status" value="1"/>
</dbReference>
<dbReference type="Gene3D" id="3.30.470.20">
    <property type="entry name" value="ATP-grasp fold, B domain"/>
    <property type="match status" value="2"/>
</dbReference>
<dbReference type="Gene3D" id="1.10.1030.10">
    <property type="entry name" value="Carbamoyl-phosphate synthetase, large subunit oligomerisation domain"/>
    <property type="match status" value="1"/>
</dbReference>
<dbReference type="Gene3D" id="3.40.50.1380">
    <property type="entry name" value="Methylglyoxal synthase-like domain"/>
    <property type="match status" value="1"/>
</dbReference>
<dbReference type="HAMAP" id="MF_01210_A">
    <property type="entry name" value="CPSase_L_chain_A"/>
    <property type="match status" value="1"/>
</dbReference>
<dbReference type="HAMAP" id="MF_01210_B">
    <property type="entry name" value="CPSase_L_chain_B"/>
    <property type="match status" value="1"/>
</dbReference>
<dbReference type="InterPro" id="IPR011761">
    <property type="entry name" value="ATP-grasp"/>
</dbReference>
<dbReference type="InterPro" id="IPR013815">
    <property type="entry name" value="ATP_grasp_subdomain_1"/>
</dbReference>
<dbReference type="InterPro" id="IPR006275">
    <property type="entry name" value="CarbamoylP_synth_lsu"/>
</dbReference>
<dbReference type="InterPro" id="IPR005480">
    <property type="entry name" value="CarbamoylP_synth_lsu_oligo"/>
</dbReference>
<dbReference type="InterPro" id="IPR036897">
    <property type="entry name" value="CarbamoylP_synth_lsu_oligo_sf"/>
</dbReference>
<dbReference type="InterPro" id="IPR005479">
    <property type="entry name" value="CbamoylP_synth_lsu-like_ATP-bd"/>
</dbReference>
<dbReference type="InterPro" id="IPR005483">
    <property type="entry name" value="CbamoylP_synth_lsu_CPSase_dom"/>
</dbReference>
<dbReference type="InterPro" id="IPR011607">
    <property type="entry name" value="MGS-like_dom"/>
</dbReference>
<dbReference type="InterPro" id="IPR036914">
    <property type="entry name" value="MGS-like_dom_sf"/>
</dbReference>
<dbReference type="InterPro" id="IPR033937">
    <property type="entry name" value="MGS_CPS_CarB"/>
</dbReference>
<dbReference type="InterPro" id="IPR016185">
    <property type="entry name" value="PreATP-grasp_dom_sf"/>
</dbReference>
<dbReference type="NCBIfam" id="TIGR01369">
    <property type="entry name" value="CPSaseII_lrg"/>
    <property type="match status" value="1"/>
</dbReference>
<dbReference type="NCBIfam" id="NF003671">
    <property type="entry name" value="PRK05294.1"/>
    <property type="match status" value="1"/>
</dbReference>
<dbReference type="NCBIfam" id="NF009455">
    <property type="entry name" value="PRK12815.1"/>
    <property type="match status" value="1"/>
</dbReference>
<dbReference type="PANTHER" id="PTHR11405:SF53">
    <property type="entry name" value="CARBAMOYL-PHOSPHATE SYNTHASE [AMMONIA], MITOCHONDRIAL"/>
    <property type="match status" value="1"/>
</dbReference>
<dbReference type="PANTHER" id="PTHR11405">
    <property type="entry name" value="CARBAMOYLTRANSFERASE FAMILY MEMBER"/>
    <property type="match status" value="1"/>
</dbReference>
<dbReference type="Pfam" id="PF02786">
    <property type="entry name" value="CPSase_L_D2"/>
    <property type="match status" value="2"/>
</dbReference>
<dbReference type="Pfam" id="PF02787">
    <property type="entry name" value="CPSase_L_D3"/>
    <property type="match status" value="1"/>
</dbReference>
<dbReference type="Pfam" id="PF02142">
    <property type="entry name" value="MGS"/>
    <property type="match status" value="1"/>
</dbReference>
<dbReference type="PRINTS" id="PR00098">
    <property type="entry name" value="CPSASE"/>
</dbReference>
<dbReference type="SMART" id="SM01096">
    <property type="entry name" value="CPSase_L_D3"/>
    <property type="match status" value="1"/>
</dbReference>
<dbReference type="SMART" id="SM00851">
    <property type="entry name" value="MGS"/>
    <property type="match status" value="1"/>
</dbReference>
<dbReference type="SUPFAM" id="SSF48108">
    <property type="entry name" value="Carbamoyl phosphate synthetase, large subunit connection domain"/>
    <property type="match status" value="1"/>
</dbReference>
<dbReference type="SUPFAM" id="SSF56059">
    <property type="entry name" value="Glutathione synthetase ATP-binding domain-like"/>
    <property type="match status" value="2"/>
</dbReference>
<dbReference type="SUPFAM" id="SSF52335">
    <property type="entry name" value="Methylglyoxal synthase-like"/>
    <property type="match status" value="1"/>
</dbReference>
<dbReference type="SUPFAM" id="SSF52440">
    <property type="entry name" value="PreATP-grasp domain"/>
    <property type="match status" value="2"/>
</dbReference>
<dbReference type="PROSITE" id="PS50975">
    <property type="entry name" value="ATP_GRASP"/>
    <property type="match status" value="2"/>
</dbReference>
<dbReference type="PROSITE" id="PS00866">
    <property type="entry name" value="CPSASE_1"/>
    <property type="match status" value="2"/>
</dbReference>
<dbReference type="PROSITE" id="PS00867">
    <property type="entry name" value="CPSASE_2"/>
    <property type="match status" value="2"/>
</dbReference>
<dbReference type="PROSITE" id="PS51855">
    <property type="entry name" value="MGS"/>
    <property type="match status" value="1"/>
</dbReference>